<keyword id="KW-0066">ATP synthesis</keyword>
<keyword id="KW-0067">ATP-binding</keyword>
<keyword id="KW-0139">CF(1)</keyword>
<keyword id="KW-0150">Chloroplast</keyword>
<keyword id="KW-0375">Hydrogen ion transport</keyword>
<keyword id="KW-0406">Ion transport</keyword>
<keyword id="KW-0472">Membrane</keyword>
<keyword id="KW-0547">Nucleotide-binding</keyword>
<keyword id="KW-0934">Plastid</keyword>
<keyword id="KW-1185">Reference proteome</keyword>
<keyword id="KW-0793">Thylakoid</keyword>
<keyword id="KW-1278">Translocase</keyword>
<keyword id="KW-0813">Transport</keyword>
<evidence type="ECO:0000255" key="1">
    <source>
        <dbReference type="HAMAP-Rule" id="MF_01347"/>
    </source>
</evidence>
<organism>
    <name type="scientific">Gossypium hirsutum</name>
    <name type="common">Upland cotton</name>
    <name type="synonym">Gossypium mexicanum</name>
    <dbReference type="NCBI Taxonomy" id="3635"/>
    <lineage>
        <taxon>Eukaryota</taxon>
        <taxon>Viridiplantae</taxon>
        <taxon>Streptophyta</taxon>
        <taxon>Embryophyta</taxon>
        <taxon>Tracheophyta</taxon>
        <taxon>Spermatophyta</taxon>
        <taxon>Magnoliopsida</taxon>
        <taxon>eudicotyledons</taxon>
        <taxon>Gunneridae</taxon>
        <taxon>Pentapetalae</taxon>
        <taxon>rosids</taxon>
        <taxon>malvids</taxon>
        <taxon>Malvales</taxon>
        <taxon>Malvaceae</taxon>
        <taxon>Malvoideae</taxon>
        <taxon>Gossypium</taxon>
    </lineage>
</organism>
<proteinExistence type="inferred from homology"/>
<gene>
    <name evidence="1" type="primary">atpB</name>
</gene>
<protein>
    <recommendedName>
        <fullName evidence="1">ATP synthase subunit beta, chloroplastic</fullName>
        <ecNumber evidence="1">7.1.2.2</ecNumber>
    </recommendedName>
    <alternativeName>
        <fullName evidence="1">ATP synthase F1 sector subunit beta</fullName>
    </alternativeName>
    <alternativeName>
        <fullName evidence="1">F-ATPase subunit beta</fullName>
    </alternativeName>
</protein>
<comment type="function">
    <text evidence="1">Produces ATP from ADP in the presence of a proton gradient across the membrane. The catalytic sites are hosted primarily by the beta subunits.</text>
</comment>
<comment type="catalytic activity">
    <reaction evidence="1">
        <text>ATP + H2O + 4 H(+)(in) = ADP + phosphate + 5 H(+)(out)</text>
        <dbReference type="Rhea" id="RHEA:57720"/>
        <dbReference type="ChEBI" id="CHEBI:15377"/>
        <dbReference type="ChEBI" id="CHEBI:15378"/>
        <dbReference type="ChEBI" id="CHEBI:30616"/>
        <dbReference type="ChEBI" id="CHEBI:43474"/>
        <dbReference type="ChEBI" id="CHEBI:456216"/>
        <dbReference type="EC" id="7.1.2.2"/>
    </reaction>
</comment>
<comment type="subunit">
    <text evidence="1">F-type ATPases have 2 components, CF(1) - the catalytic core - and CF(0) - the membrane proton channel. CF(1) has five subunits: alpha(3), beta(3), gamma(1), delta(1), epsilon(1). CF(0) has four main subunits: a(1), b(1), b'(1) and c(9-12).</text>
</comment>
<comment type="subcellular location">
    <subcellularLocation>
        <location evidence="1">Plastid</location>
        <location evidence="1">Chloroplast thylakoid membrane</location>
        <topology evidence="1">Peripheral membrane protein</topology>
    </subcellularLocation>
</comment>
<comment type="similarity">
    <text evidence="1">Belongs to the ATPase alpha/beta chains family.</text>
</comment>
<dbReference type="EC" id="7.1.2.2" evidence="1"/>
<dbReference type="EMBL" id="DQ345959">
    <property type="protein sequence ID" value="ABC73635.1"/>
    <property type="molecule type" value="Genomic_DNA"/>
</dbReference>
<dbReference type="RefSeq" id="YP_538942.1">
    <property type="nucleotide sequence ID" value="NC_007944.1"/>
</dbReference>
<dbReference type="SMR" id="Q2L917"/>
<dbReference type="GeneID" id="3989156"/>
<dbReference type="KEGG" id="ghi:3989156"/>
<dbReference type="OrthoDB" id="29547at41938"/>
<dbReference type="Proteomes" id="UP000189702">
    <property type="component" value="Chloroplast Pltd"/>
</dbReference>
<dbReference type="GO" id="GO:0009535">
    <property type="term" value="C:chloroplast thylakoid membrane"/>
    <property type="evidence" value="ECO:0007669"/>
    <property type="project" value="UniProtKB-SubCell"/>
</dbReference>
<dbReference type="GO" id="GO:0005739">
    <property type="term" value="C:mitochondrion"/>
    <property type="evidence" value="ECO:0007669"/>
    <property type="project" value="GOC"/>
</dbReference>
<dbReference type="GO" id="GO:0045259">
    <property type="term" value="C:proton-transporting ATP synthase complex"/>
    <property type="evidence" value="ECO:0007669"/>
    <property type="project" value="UniProtKB-KW"/>
</dbReference>
<dbReference type="GO" id="GO:0005524">
    <property type="term" value="F:ATP binding"/>
    <property type="evidence" value="ECO:0007669"/>
    <property type="project" value="UniProtKB-UniRule"/>
</dbReference>
<dbReference type="GO" id="GO:0016887">
    <property type="term" value="F:ATP hydrolysis activity"/>
    <property type="evidence" value="ECO:0007669"/>
    <property type="project" value="InterPro"/>
</dbReference>
<dbReference type="GO" id="GO:0046933">
    <property type="term" value="F:proton-transporting ATP synthase activity, rotational mechanism"/>
    <property type="evidence" value="ECO:0007669"/>
    <property type="project" value="UniProtKB-UniRule"/>
</dbReference>
<dbReference type="GO" id="GO:0042776">
    <property type="term" value="P:proton motive force-driven mitochondrial ATP synthesis"/>
    <property type="evidence" value="ECO:0000318"/>
    <property type="project" value="GO_Central"/>
</dbReference>
<dbReference type="CDD" id="cd18110">
    <property type="entry name" value="ATP-synt_F1_beta_C"/>
    <property type="match status" value="1"/>
</dbReference>
<dbReference type="CDD" id="cd18115">
    <property type="entry name" value="ATP-synt_F1_beta_N"/>
    <property type="match status" value="1"/>
</dbReference>
<dbReference type="CDD" id="cd01133">
    <property type="entry name" value="F1-ATPase_beta_CD"/>
    <property type="match status" value="1"/>
</dbReference>
<dbReference type="FunFam" id="1.10.1140.10:FF:000001">
    <property type="entry name" value="ATP synthase subunit beta"/>
    <property type="match status" value="1"/>
</dbReference>
<dbReference type="FunFam" id="3.40.50.12240:FF:000006">
    <property type="entry name" value="ATP synthase subunit beta"/>
    <property type="match status" value="1"/>
</dbReference>
<dbReference type="FunFam" id="3.40.50.300:FF:000004">
    <property type="entry name" value="ATP synthase subunit beta"/>
    <property type="match status" value="1"/>
</dbReference>
<dbReference type="FunFam" id="2.40.10.170:FF:000002">
    <property type="entry name" value="ATP synthase subunit beta, chloroplastic"/>
    <property type="match status" value="1"/>
</dbReference>
<dbReference type="Gene3D" id="2.40.10.170">
    <property type="match status" value="1"/>
</dbReference>
<dbReference type="Gene3D" id="1.10.1140.10">
    <property type="entry name" value="Bovine Mitochondrial F1-atpase, Atp Synthase Beta Chain, Chain D, domain 3"/>
    <property type="match status" value="1"/>
</dbReference>
<dbReference type="Gene3D" id="3.40.50.300">
    <property type="entry name" value="P-loop containing nucleotide triphosphate hydrolases"/>
    <property type="match status" value="1"/>
</dbReference>
<dbReference type="HAMAP" id="MF_01347">
    <property type="entry name" value="ATP_synth_beta_bact"/>
    <property type="match status" value="1"/>
</dbReference>
<dbReference type="InterPro" id="IPR003593">
    <property type="entry name" value="AAA+_ATPase"/>
</dbReference>
<dbReference type="InterPro" id="IPR055190">
    <property type="entry name" value="ATP-synt_VA_C"/>
</dbReference>
<dbReference type="InterPro" id="IPR005722">
    <property type="entry name" value="ATP_synth_F1_bsu"/>
</dbReference>
<dbReference type="InterPro" id="IPR020003">
    <property type="entry name" value="ATPase_a/bsu_AS"/>
</dbReference>
<dbReference type="InterPro" id="IPR050053">
    <property type="entry name" value="ATPase_alpha/beta_chains"/>
</dbReference>
<dbReference type="InterPro" id="IPR004100">
    <property type="entry name" value="ATPase_F1/V1/A1_a/bsu_N"/>
</dbReference>
<dbReference type="InterPro" id="IPR036121">
    <property type="entry name" value="ATPase_F1/V1/A1_a/bsu_N_sf"/>
</dbReference>
<dbReference type="InterPro" id="IPR000194">
    <property type="entry name" value="ATPase_F1/V1/A1_a/bsu_nucl-bd"/>
</dbReference>
<dbReference type="InterPro" id="IPR024034">
    <property type="entry name" value="ATPase_F1/V1_b/a_C"/>
</dbReference>
<dbReference type="InterPro" id="IPR027417">
    <property type="entry name" value="P-loop_NTPase"/>
</dbReference>
<dbReference type="NCBIfam" id="TIGR01039">
    <property type="entry name" value="atpD"/>
    <property type="match status" value="1"/>
</dbReference>
<dbReference type="PANTHER" id="PTHR15184">
    <property type="entry name" value="ATP SYNTHASE"/>
    <property type="match status" value="1"/>
</dbReference>
<dbReference type="PANTHER" id="PTHR15184:SF71">
    <property type="entry name" value="ATP SYNTHASE SUBUNIT BETA, MITOCHONDRIAL"/>
    <property type="match status" value="1"/>
</dbReference>
<dbReference type="Pfam" id="PF00006">
    <property type="entry name" value="ATP-synt_ab"/>
    <property type="match status" value="1"/>
</dbReference>
<dbReference type="Pfam" id="PF02874">
    <property type="entry name" value="ATP-synt_ab_N"/>
    <property type="match status" value="1"/>
</dbReference>
<dbReference type="Pfam" id="PF22919">
    <property type="entry name" value="ATP-synt_VA_C"/>
    <property type="match status" value="1"/>
</dbReference>
<dbReference type="SMART" id="SM00382">
    <property type="entry name" value="AAA"/>
    <property type="match status" value="1"/>
</dbReference>
<dbReference type="SUPFAM" id="SSF47917">
    <property type="entry name" value="C-terminal domain of alpha and beta subunits of F1 ATP synthase"/>
    <property type="match status" value="1"/>
</dbReference>
<dbReference type="SUPFAM" id="SSF50615">
    <property type="entry name" value="N-terminal domain of alpha and beta subunits of F1 ATP synthase"/>
    <property type="match status" value="1"/>
</dbReference>
<dbReference type="SUPFAM" id="SSF52540">
    <property type="entry name" value="P-loop containing nucleoside triphosphate hydrolases"/>
    <property type="match status" value="1"/>
</dbReference>
<dbReference type="PROSITE" id="PS00152">
    <property type="entry name" value="ATPASE_ALPHA_BETA"/>
    <property type="match status" value="1"/>
</dbReference>
<geneLocation type="chloroplast"/>
<reference key="1">
    <citation type="journal article" date="2006" name="BMC Genomics">
        <title>The complete chloroplast genome sequence of Gossypium hirsutum: organization and phylogenetic relationships to other angiosperms.</title>
        <authorList>
            <person name="Lee S.-B."/>
            <person name="Kaittanis C."/>
            <person name="Jansen R.K."/>
            <person name="Hostetler J.B."/>
            <person name="Tallon L.J."/>
            <person name="Town C.D."/>
            <person name="Daniell H."/>
        </authorList>
    </citation>
    <scope>NUCLEOTIDE SEQUENCE [LARGE SCALE GENOMIC DNA]</scope>
    <source>
        <strain>cv. Coker 310FR</strain>
    </source>
</reference>
<feature type="chain" id="PRO_0000254478" description="ATP synthase subunit beta, chloroplastic">
    <location>
        <begin position="1"/>
        <end position="498"/>
    </location>
</feature>
<feature type="binding site" evidence="1">
    <location>
        <begin position="172"/>
        <end position="179"/>
    </location>
    <ligand>
        <name>ATP</name>
        <dbReference type="ChEBI" id="CHEBI:30616"/>
    </ligand>
</feature>
<accession>Q2L917</accession>
<sequence>MKINPTTSVPGVSTLEKENLGRISQIIGPVLDVAFPPGKMPNIYNALVVKGQDTAGQQINVTCEVQQLLGNNRVRAVAMSATDGLTRGMEVIDTGAALSVPVGGATLGRIFNVLGEPVDNLGPVDTRTTSPIHKSAPAFIQLDTKLSIFETGIKVVDLLAPYRRGGKIGLFGGAGVGKTVLIMELINNIAKAHGGVSVFGGVGERTREGNDLYMEMKESGVINEQNLAESKVALVYGQMNEPPGARMRVGLTALTMAEYFRDVNEQDVLLFIDNIFRFVQAGSEVSALLGRMPSAVGYQPTLSTEMGTLQERITSTKEGSITSIQAVYVPADDLTDPAPATTFAHLDATTVLSRGLAAKGIYPAVDPLDSTSTMLQPRIVGEEHYETAQRVKQTLQRYKELQDIIAILGLDELSEEDRLTVARARKIERFLSQPFFVAEVFTGSPGKYVGLAETIRGFKLILSGELDGLPEQAFYLVGNIDEATAKATNLEMESKLKK</sequence>
<name>ATPB_GOSHI</name>